<accession>Q92615</accession>
<accession>A7MD20</accession>
<accession>Q5T3R3</accession>
<accession>Q5T3R4</accession>
<accession>Q5T3R5</accession>
<accession>Q68CY4</accession>
<gene>
    <name type="primary">LARP4B</name>
    <name type="synonym">KIAA0217</name>
    <name type="synonym">LARP5</name>
</gene>
<dbReference type="EMBL" id="D86971">
    <property type="protein sequence ID" value="BAA13207.2"/>
    <property type="status" value="ALT_INIT"/>
    <property type="molecule type" value="mRNA"/>
</dbReference>
<dbReference type="EMBL" id="AK292946">
    <property type="protein sequence ID" value="BAF85635.1"/>
    <property type="molecule type" value="mRNA"/>
</dbReference>
<dbReference type="EMBL" id="AL359878">
    <property type="status" value="NOT_ANNOTATED_CDS"/>
    <property type="molecule type" value="Genomic_DNA"/>
</dbReference>
<dbReference type="EMBL" id="AL157709">
    <property type="status" value="NOT_ANNOTATED_CDS"/>
    <property type="molecule type" value="Genomic_DNA"/>
</dbReference>
<dbReference type="EMBL" id="CH471072">
    <property type="protein sequence ID" value="EAW86530.1"/>
    <property type="molecule type" value="Genomic_DNA"/>
</dbReference>
<dbReference type="EMBL" id="BC131630">
    <property type="protein sequence ID" value="AAI31631.1"/>
    <property type="molecule type" value="mRNA"/>
</dbReference>
<dbReference type="EMBL" id="BC152443">
    <property type="protein sequence ID" value="AAI52444.1"/>
    <property type="molecule type" value="mRNA"/>
</dbReference>
<dbReference type="EMBL" id="CR749653">
    <property type="protein sequence ID" value="CAH18446.1"/>
    <property type="molecule type" value="mRNA"/>
</dbReference>
<dbReference type="CCDS" id="CCDS31131.1"/>
<dbReference type="RefSeq" id="NP_055970.1">
    <property type="nucleotide sequence ID" value="NM_015155.3"/>
</dbReference>
<dbReference type="RefSeq" id="XP_047280852.1">
    <property type="nucleotide sequence ID" value="XM_047424896.1"/>
</dbReference>
<dbReference type="RefSeq" id="XP_047280853.1">
    <property type="nucleotide sequence ID" value="XM_047424897.1"/>
</dbReference>
<dbReference type="PDB" id="3PTH">
    <property type="method" value="X-ray"/>
    <property type="resolution" value="1.70 A"/>
    <property type="chains" value="B=55-69"/>
</dbReference>
<dbReference type="PDBsum" id="3PTH"/>
<dbReference type="SMR" id="Q92615"/>
<dbReference type="BioGRID" id="116795">
    <property type="interactions" value="261"/>
</dbReference>
<dbReference type="ELM" id="Q92615"/>
<dbReference type="FunCoup" id="Q92615">
    <property type="interactions" value="1253"/>
</dbReference>
<dbReference type="IntAct" id="Q92615">
    <property type="interactions" value="160"/>
</dbReference>
<dbReference type="MINT" id="Q92615"/>
<dbReference type="STRING" id="9606.ENSP00000326128"/>
<dbReference type="GlyCosmos" id="Q92615">
    <property type="glycosylation" value="3 sites, 1 glycan"/>
</dbReference>
<dbReference type="GlyGen" id="Q92615">
    <property type="glycosylation" value="6 sites, 1 O-linked glycan (5 sites)"/>
</dbReference>
<dbReference type="iPTMnet" id="Q92615"/>
<dbReference type="PhosphoSitePlus" id="Q92615"/>
<dbReference type="SwissPalm" id="Q92615"/>
<dbReference type="BioMuta" id="LARP4B"/>
<dbReference type="DMDM" id="134034150"/>
<dbReference type="jPOST" id="Q92615"/>
<dbReference type="MassIVE" id="Q92615"/>
<dbReference type="PaxDb" id="9606-ENSP00000482767"/>
<dbReference type="PeptideAtlas" id="Q92615"/>
<dbReference type="ProteomicsDB" id="75363"/>
<dbReference type="Pumba" id="Q92615"/>
<dbReference type="Antibodypedia" id="52530">
    <property type="antibodies" value="47 antibodies from 16 providers"/>
</dbReference>
<dbReference type="DNASU" id="23185"/>
<dbReference type="Ensembl" id="ENST00000316157.8">
    <property type="protein sequence ID" value="ENSP00000326128.3"/>
    <property type="gene ID" value="ENSG00000107929.16"/>
</dbReference>
<dbReference type="GeneID" id="23185"/>
<dbReference type="KEGG" id="hsa:23185"/>
<dbReference type="MANE-Select" id="ENST00000316157.8">
    <property type="protein sequence ID" value="ENSP00000326128.3"/>
    <property type="RefSeq nucleotide sequence ID" value="NM_015155.3"/>
    <property type="RefSeq protein sequence ID" value="NP_055970.1"/>
</dbReference>
<dbReference type="UCSC" id="uc031ptb.1">
    <property type="organism name" value="human"/>
</dbReference>
<dbReference type="AGR" id="HGNC:28987"/>
<dbReference type="CTD" id="23185"/>
<dbReference type="DisGeNET" id="23185"/>
<dbReference type="GeneCards" id="LARP4B"/>
<dbReference type="HGNC" id="HGNC:28987">
    <property type="gene designation" value="LARP4B"/>
</dbReference>
<dbReference type="HPA" id="ENSG00000107929">
    <property type="expression patterns" value="Low tissue specificity"/>
</dbReference>
<dbReference type="MIM" id="616513">
    <property type="type" value="gene"/>
</dbReference>
<dbReference type="neXtProt" id="NX_Q92615"/>
<dbReference type="OpenTargets" id="ENSG00000107929"/>
<dbReference type="PharmGKB" id="PA165548762"/>
<dbReference type="VEuPathDB" id="HostDB:ENSG00000107929"/>
<dbReference type="eggNOG" id="KOG2591">
    <property type="taxonomic scope" value="Eukaryota"/>
</dbReference>
<dbReference type="GeneTree" id="ENSGT00940000157755"/>
<dbReference type="HOGENOM" id="CLU_025110_0_0_1"/>
<dbReference type="InParanoid" id="Q92615"/>
<dbReference type="OMA" id="RMQNTTT"/>
<dbReference type="OrthoDB" id="10046764at2759"/>
<dbReference type="PAN-GO" id="Q92615">
    <property type="GO annotations" value="4 GO annotations based on evolutionary models"/>
</dbReference>
<dbReference type="PhylomeDB" id="Q92615"/>
<dbReference type="TreeFam" id="TF321960"/>
<dbReference type="PathwayCommons" id="Q92615"/>
<dbReference type="SignaLink" id="Q92615"/>
<dbReference type="SIGNOR" id="Q92615"/>
<dbReference type="BioGRID-ORCS" id="23185">
    <property type="hits" value="21 hits in 1171 CRISPR screens"/>
</dbReference>
<dbReference type="CD-CODE" id="232F8A39">
    <property type="entry name" value="P-body"/>
</dbReference>
<dbReference type="CD-CODE" id="DEE660B4">
    <property type="entry name" value="Stress granule"/>
</dbReference>
<dbReference type="ChiTaRS" id="LARP4B">
    <property type="organism name" value="human"/>
</dbReference>
<dbReference type="GenomeRNAi" id="23185"/>
<dbReference type="Pharos" id="Q92615">
    <property type="development level" value="Tbio"/>
</dbReference>
<dbReference type="PRO" id="PR:Q92615"/>
<dbReference type="Proteomes" id="UP000005640">
    <property type="component" value="Chromosome 10"/>
</dbReference>
<dbReference type="RNAct" id="Q92615">
    <property type="molecule type" value="protein"/>
</dbReference>
<dbReference type="Bgee" id="ENSG00000107929">
    <property type="expression patterns" value="Expressed in apex of heart and 196 other cell types or tissues"/>
</dbReference>
<dbReference type="ExpressionAtlas" id="Q92615">
    <property type="expression patterns" value="baseline and differential"/>
</dbReference>
<dbReference type="GO" id="GO:0010494">
    <property type="term" value="C:cytoplasmic stress granule"/>
    <property type="evidence" value="ECO:0000314"/>
    <property type="project" value="UniProtKB"/>
</dbReference>
<dbReference type="GO" id="GO:0005829">
    <property type="term" value="C:cytosol"/>
    <property type="evidence" value="ECO:0000314"/>
    <property type="project" value="UniProtKB"/>
</dbReference>
<dbReference type="GO" id="GO:0016020">
    <property type="term" value="C:membrane"/>
    <property type="evidence" value="ECO:0007005"/>
    <property type="project" value="UniProtKB"/>
</dbReference>
<dbReference type="GO" id="GO:0005730">
    <property type="term" value="C:nucleolus"/>
    <property type="evidence" value="ECO:0000314"/>
    <property type="project" value="HPA"/>
</dbReference>
<dbReference type="GO" id="GO:0003730">
    <property type="term" value="F:mRNA 3'-UTR binding"/>
    <property type="evidence" value="ECO:0000314"/>
    <property type="project" value="FlyBase"/>
</dbReference>
<dbReference type="GO" id="GO:0003723">
    <property type="term" value="F:RNA binding"/>
    <property type="evidence" value="ECO:0007005"/>
    <property type="project" value="UniProtKB"/>
</dbReference>
<dbReference type="GO" id="GO:1905870">
    <property type="term" value="P:positive regulation of 3'-UTR-mediated mRNA stabilization"/>
    <property type="evidence" value="ECO:0000315"/>
    <property type="project" value="FlyBase"/>
</dbReference>
<dbReference type="GO" id="GO:0045727">
    <property type="term" value="P:positive regulation of translation"/>
    <property type="evidence" value="ECO:0000315"/>
    <property type="project" value="UniProtKB"/>
</dbReference>
<dbReference type="CDD" id="cd08036">
    <property type="entry name" value="LARP_5"/>
    <property type="match status" value="1"/>
</dbReference>
<dbReference type="CDD" id="cd12706">
    <property type="entry name" value="RRM_LARP5"/>
    <property type="match status" value="1"/>
</dbReference>
<dbReference type="FunFam" id="1.10.10.10:FF:000144">
    <property type="entry name" value="la-related protein 4 isoform X2"/>
    <property type="match status" value="1"/>
</dbReference>
<dbReference type="Gene3D" id="3.30.70.330">
    <property type="match status" value="1"/>
</dbReference>
<dbReference type="Gene3D" id="1.10.10.10">
    <property type="entry name" value="Winged helix-like DNA-binding domain superfamily/Winged helix DNA-binding domain"/>
    <property type="match status" value="1"/>
</dbReference>
<dbReference type="InterPro" id="IPR045180">
    <property type="entry name" value="La_dom_prot"/>
</dbReference>
<dbReference type="InterPro" id="IPR006630">
    <property type="entry name" value="La_HTH"/>
</dbReference>
<dbReference type="InterPro" id="IPR034900">
    <property type="entry name" value="LARP5_RRM"/>
</dbReference>
<dbReference type="InterPro" id="IPR012677">
    <property type="entry name" value="Nucleotide-bd_a/b_plait_sf"/>
</dbReference>
<dbReference type="InterPro" id="IPR035979">
    <property type="entry name" value="RBD_domain_sf"/>
</dbReference>
<dbReference type="InterPro" id="IPR036388">
    <property type="entry name" value="WH-like_DNA-bd_sf"/>
</dbReference>
<dbReference type="InterPro" id="IPR036390">
    <property type="entry name" value="WH_DNA-bd_sf"/>
</dbReference>
<dbReference type="PANTHER" id="PTHR22792:SF43">
    <property type="entry name" value="LA-RELATED PROTEIN 4B"/>
    <property type="match status" value="1"/>
</dbReference>
<dbReference type="PANTHER" id="PTHR22792">
    <property type="entry name" value="LUPUS LA PROTEIN-RELATED"/>
    <property type="match status" value="1"/>
</dbReference>
<dbReference type="Pfam" id="PF05383">
    <property type="entry name" value="La"/>
    <property type="match status" value="1"/>
</dbReference>
<dbReference type="SMART" id="SM00715">
    <property type="entry name" value="LA"/>
    <property type="match status" value="1"/>
</dbReference>
<dbReference type="SUPFAM" id="SSF54928">
    <property type="entry name" value="RNA-binding domain, RBD"/>
    <property type="match status" value="1"/>
</dbReference>
<dbReference type="SUPFAM" id="SSF46785">
    <property type="entry name" value="Winged helix' DNA-binding domain"/>
    <property type="match status" value="1"/>
</dbReference>
<dbReference type="PROSITE" id="PS50961">
    <property type="entry name" value="HTH_LA"/>
    <property type="match status" value="1"/>
</dbReference>
<keyword id="KW-0002">3D-structure</keyword>
<keyword id="KW-0007">Acetylation</keyword>
<keyword id="KW-0963">Cytoplasm</keyword>
<keyword id="KW-0488">Methylation</keyword>
<keyword id="KW-0597">Phosphoprotein</keyword>
<keyword id="KW-1267">Proteomics identification</keyword>
<keyword id="KW-1185">Reference proteome</keyword>
<keyword id="KW-0694">RNA-binding</keyword>
<keyword id="KW-0810">Translation regulation</keyword>
<organism>
    <name type="scientific">Homo sapiens</name>
    <name type="common">Human</name>
    <dbReference type="NCBI Taxonomy" id="9606"/>
    <lineage>
        <taxon>Eukaryota</taxon>
        <taxon>Metazoa</taxon>
        <taxon>Chordata</taxon>
        <taxon>Craniata</taxon>
        <taxon>Vertebrata</taxon>
        <taxon>Euteleostomi</taxon>
        <taxon>Mammalia</taxon>
        <taxon>Eutheria</taxon>
        <taxon>Euarchontoglires</taxon>
        <taxon>Primates</taxon>
        <taxon>Haplorrhini</taxon>
        <taxon>Catarrhini</taxon>
        <taxon>Hominidae</taxon>
        <taxon>Homo</taxon>
    </lineage>
</organism>
<comment type="function">
    <text evidence="4">Stimulates mRNA translation.</text>
</comment>
<comment type="subunit">
    <text evidence="4 5">Interacts with PABPC1 (PubMed:20573744, Ref.23). Interacts with RACK1 (PubMed:20573744). Associates with polysomes via the 40S ribosomal subunit (PubMed:20573744).</text>
</comment>
<comment type="interaction">
    <interactant intactId="EBI-1052558">
        <id>Q92615</id>
    </interactant>
    <interactant intactId="EBI-8624731">
        <id>P0C7T5</id>
        <label>ATXN1L</label>
    </interactant>
    <organismsDiffer>false</organismsDiffer>
    <experiments>3</experiments>
</comment>
<comment type="interaction">
    <interactant intactId="EBI-1052558">
        <id>Q92615</id>
    </interactant>
    <interactant intactId="EBI-11282723">
        <id>Q9Y5Z0</id>
        <label>BACE2</label>
    </interactant>
    <organismsDiffer>false</organismsDiffer>
    <experiments>3</experiments>
</comment>
<comment type="interaction">
    <interactant intactId="EBI-1052558">
        <id>Q92615</id>
    </interactant>
    <interactant intactId="EBI-10988864">
        <id>P46379-2</id>
        <label>BAG6</label>
    </interactant>
    <organismsDiffer>false</organismsDiffer>
    <experiments>3</experiments>
</comment>
<comment type="interaction">
    <interactant intactId="EBI-1052558">
        <id>Q92615</id>
    </interactant>
    <interactant intactId="EBI-6875961">
        <id>P02489</id>
        <label>CRYAA</label>
    </interactant>
    <organismsDiffer>false</organismsDiffer>
    <experiments>3</experiments>
</comment>
<comment type="interaction">
    <interactant intactId="EBI-1052558">
        <id>Q92615</id>
    </interactant>
    <interactant intactId="EBI-750300">
        <id>Q01658</id>
        <label>DR1</label>
    </interactant>
    <organismsDiffer>false</organismsDiffer>
    <experiments>3</experiments>
</comment>
<comment type="interaction">
    <interactant intactId="EBI-1052558">
        <id>Q92615</id>
    </interactant>
    <interactant intactId="EBI-1054228">
        <id>P41091</id>
        <label>EIF2S3</label>
    </interactant>
    <organismsDiffer>false</organismsDiffer>
    <experiments>3</experiments>
</comment>
<comment type="interaction">
    <interactant intactId="EBI-1052558">
        <id>Q92615</id>
    </interactant>
    <interactant intactId="EBI-25852368">
        <id>O75460-2</id>
        <label>ERN1</label>
    </interactant>
    <organismsDiffer>false</organismsDiffer>
    <experiments>3</experiments>
</comment>
<comment type="interaction">
    <interactant intactId="EBI-1052558">
        <id>Q92615</id>
    </interactant>
    <interactant intactId="EBI-742600">
        <id>Q9Y624</id>
        <label>F11R</label>
    </interactant>
    <organismsDiffer>false</organismsDiffer>
    <experiments>3</experiments>
</comment>
<comment type="interaction">
    <interactant intactId="EBI-1052558">
        <id>Q92615</id>
    </interactant>
    <interactant intactId="EBI-10226858">
        <id>Q0VDC6</id>
        <label>FKBP1A</label>
    </interactant>
    <organismsDiffer>false</organismsDiffer>
    <experiments>3</experiments>
</comment>
<comment type="interaction">
    <interactant intactId="EBI-1052558">
        <id>Q92615</id>
    </interactant>
    <interactant intactId="EBI-1054873">
        <id>Q9Y5Q9</id>
        <label>GTF3C3</label>
    </interactant>
    <organismsDiffer>false</organismsDiffer>
    <experiments>3</experiments>
</comment>
<comment type="interaction">
    <interactant intactId="EBI-1052558">
        <id>Q92615</id>
    </interactant>
    <interactant intactId="EBI-356991">
        <id>P54652</id>
        <label>HSPA2</label>
    </interactant>
    <organismsDiffer>false</organismsDiffer>
    <experiments>3</experiments>
</comment>
<comment type="interaction">
    <interactant intactId="EBI-1052558">
        <id>Q92615</id>
    </interactant>
    <interactant intactId="EBI-466029">
        <id>P42858</id>
        <label>HTT</label>
    </interactant>
    <organismsDiffer>false</organismsDiffer>
    <experiments>3</experiments>
</comment>
<comment type="interaction">
    <interactant intactId="EBI-1052558">
        <id>Q92615</id>
    </interactant>
    <interactant intactId="EBI-948266">
        <id>O14901</id>
        <label>KLF11</label>
    </interactant>
    <organismsDiffer>false</organismsDiffer>
    <experiments>3</experiments>
</comment>
<comment type="interaction">
    <interactant intactId="EBI-1052558">
        <id>Q92615</id>
    </interactant>
    <interactant intactId="EBI-2432309">
        <id>Q92876</id>
        <label>KLK6</label>
    </interactant>
    <organismsDiffer>false</organismsDiffer>
    <experiments>3</experiments>
</comment>
<comment type="interaction">
    <interactant intactId="EBI-1052558">
        <id>Q92615</id>
    </interactant>
    <interactant intactId="EBI-716006">
        <id>Q9Y5V3</id>
        <label>MAGED1</label>
    </interactant>
    <organismsDiffer>false</organismsDiffer>
    <experiments>3</experiments>
</comment>
<comment type="interaction">
    <interactant intactId="EBI-1052558">
        <id>Q92615</id>
    </interactant>
    <interactant intactId="EBI-6190702">
        <id>P28331-2</id>
        <label>NDUFS1</label>
    </interactant>
    <organismsDiffer>false</organismsDiffer>
    <experiments>3</experiments>
</comment>
<comment type="interaction">
    <interactant intactId="EBI-1052558">
        <id>Q92615</id>
    </interactant>
    <interactant intactId="EBI-81531">
        <id>P11940</id>
        <label>PABPC1</label>
    </interactant>
    <organismsDiffer>false</organismsDiffer>
    <experiments>4</experiments>
</comment>
<comment type="interaction">
    <interactant intactId="EBI-1052558">
        <id>Q92615</id>
    </interactant>
    <interactant intactId="EBI-473160">
        <id>Q8N2W9</id>
        <label>PIAS4</label>
    </interactant>
    <organismsDiffer>false</organismsDiffer>
    <experiments>3</experiments>
</comment>
<comment type="interaction">
    <interactant intactId="EBI-1052558">
        <id>Q92615</id>
    </interactant>
    <interactant intactId="EBI-296739">
        <id>P63244</id>
        <label>RACK1</label>
    </interactant>
    <organismsDiffer>false</organismsDiffer>
    <experiments>7</experiments>
</comment>
<comment type="interaction">
    <interactant intactId="EBI-1052558">
        <id>Q92615</id>
    </interactant>
    <interactant intactId="EBI-1053431">
        <id>P49591</id>
        <label>SARS1</label>
    </interactant>
    <organismsDiffer>false</organismsDiffer>
    <experiments>3</experiments>
</comment>
<comment type="interaction">
    <interactant intactId="EBI-1052558">
        <id>Q92615</id>
    </interactant>
    <interactant intactId="EBI-743128">
        <id>P14927</id>
        <label>UQCRB</label>
    </interactant>
    <organismsDiffer>false</organismsDiffer>
    <experiments>3</experiments>
</comment>
<comment type="interaction">
    <interactant intactId="EBI-1052558">
        <id>Q92615</id>
    </interactant>
    <interactant intactId="EBI-8456500">
        <id>E9KL35</id>
    </interactant>
    <organismsDiffer>false</organismsDiffer>
    <experiments>3</experiments>
</comment>
<comment type="subcellular location">
    <subcellularLocation>
        <location evidence="4">Cytoplasm</location>
        <location evidence="4">Cytosol</location>
    </subcellularLocation>
    <text evidence="4">Localized in cytoplasmic mRNP granules containing untranslated mRNAs in response to arsenite treatment.</text>
</comment>
<comment type="sequence caution" evidence="6">
    <conflict type="erroneous initiation">
        <sequence resource="EMBL-CDS" id="BAA13207"/>
    </conflict>
    <text>Extended N-terminus.</text>
</comment>
<feature type="chain" id="PRO_0000281139" description="La-related protein 4B">
    <location>
        <begin position="1"/>
        <end position="738"/>
    </location>
</feature>
<feature type="domain" description="HTH La-type RNA-binding" evidence="2">
    <location>
        <begin position="150"/>
        <end position="239"/>
    </location>
</feature>
<feature type="domain" description="RRM">
    <location>
        <begin position="240"/>
        <end position="307"/>
    </location>
</feature>
<feature type="region of interest" description="Disordered" evidence="3">
    <location>
        <begin position="1"/>
        <end position="52"/>
    </location>
</feature>
<feature type="region of interest" description="Disordered" evidence="3">
    <location>
        <begin position="90"/>
        <end position="157"/>
    </location>
</feature>
<feature type="region of interest" description="Disordered" evidence="3">
    <location>
        <begin position="399"/>
        <end position="420"/>
    </location>
</feature>
<feature type="region of interest" description="Disordered" evidence="3">
    <location>
        <begin position="449"/>
        <end position="540"/>
    </location>
</feature>
<feature type="region of interest" description="Disordered" evidence="3">
    <location>
        <begin position="591"/>
        <end position="738"/>
    </location>
</feature>
<feature type="compositionally biased region" description="Low complexity" evidence="3">
    <location>
        <begin position="31"/>
        <end position="47"/>
    </location>
</feature>
<feature type="compositionally biased region" description="Polar residues" evidence="3">
    <location>
        <begin position="138"/>
        <end position="151"/>
    </location>
</feature>
<feature type="compositionally biased region" description="Polar residues" evidence="3">
    <location>
        <begin position="450"/>
        <end position="468"/>
    </location>
</feature>
<feature type="compositionally biased region" description="Basic residues" evidence="3">
    <location>
        <begin position="493"/>
        <end position="503"/>
    </location>
</feature>
<feature type="compositionally biased region" description="Basic and acidic residues" evidence="3">
    <location>
        <begin position="605"/>
        <end position="622"/>
    </location>
</feature>
<feature type="compositionally biased region" description="Polar residues" evidence="3">
    <location>
        <begin position="628"/>
        <end position="640"/>
    </location>
</feature>
<feature type="compositionally biased region" description="Basic and acidic residues" evidence="3">
    <location>
        <begin position="680"/>
        <end position="697"/>
    </location>
</feature>
<feature type="compositionally biased region" description="Polar residues" evidence="3">
    <location>
        <begin position="729"/>
        <end position="738"/>
    </location>
</feature>
<feature type="modified residue" description="N-acetylmethionine" evidence="12">
    <location>
        <position position="1"/>
    </location>
</feature>
<feature type="modified residue" description="Phosphoserine" evidence="1">
    <location>
        <position position="244"/>
    </location>
</feature>
<feature type="modified residue" description="Omega-N-methylarginine" evidence="14">
    <location>
        <position position="404"/>
    </location>
</feature>
<feature type="modified residue" description="Omega-N-methylarginine" evidence="14">
    <location>
        <position position="419"/>
    </location>
</feature>
<feature type="modified residue" description="Phosphoserine" evidence="9 11">
    <location>
        <position position="424"/>
    </location>
</feature>
<feature type="modified residue" description="Phosphoserine" evidence="8 9">
    <location>
        <position position="434"/>
    </location>
</feature>
<feature type="modified residue" description="Phosphoserine" evidence="9 13">
    <location>
        <position position="451"/>
    </location>
</feature>
<feature type="modified residue" description="Phosphoserine" evidence="13">
    <location>
        <position position="488"/>
    </location>
</feature>
<feature type="modified residue" description="Omega-N-methylarginine" evidence="1">
    <location>
        <position position="493"/>
    </location>
</feature>
<feature type="modified residue" description="Phosphoserine" evidence="1">
    <location>
        <position position="498"/>
    </location>
</feature>
<feature type="modified residue" description="Phosphothreonine" evidence="11">
    <location>
        <position position="518"/>
    </location>
</feature>
<feature type="modified residue" description="Phosphoserine" evidence="9 11 13">
    <location>
        <position position="524"/>
    </location>
</feature>
<feature type="modified residue" description="Phosphoserine" evidence="13">
    <location>
        <position position="556"/>
    </location>
</feature>
<feature type="modified residue" description="Phosphothreonine" evidence="8">
    <location>
        <position position="566"/>
    </location>
</feature>
<feature type="modified residue" description="Phosphoserine" evidence="13">
    <location>
        <position position="568"/>
    </location>
</feature>
<feature type="modified residue" description="Phosphoserine" evidence="13 15">
    <location>
        <position position="601"/>
    </location>
</feature>
<feature type="modified residue" description="Phosphoserine" evidence="13">
    <location>
        <position position="664"/>
    </location>
</feature>
<feature type="modified residue" description="Phosphoserine" evidence="13">
    <location>
        <position position="718"/>
    </location>
</feature>
<feature type="modified residue" description="N6-acetyllysine" evidence="10">
    <location>
        <position position="724"/>
    </location>
</feature>
<feature type="modified residue" description="Phosphoserine" evidence="9">
    <location>
        <position position="727"/>
    </location>
</feature>
<feature type="modified residue" description="Phosphothreonine" evidence="1">
    <location>
        <position position="732"/>
    </location>
</feature>
<feature type="modified residue" description="Phosphoserine" evidence="9">
    <location>
        <position position="736"/>
    </location>
</feature>
<proteinExistence type="evidence at protein level"/>
<evidence type="ECO:0000250" key="1">
    <source>
        <dbReference type="UniProtKB" id="Q6A0A2"/>
    </source>
</evidence>
<evidence type="ECO:0000255" key="2">
    <source>
        <dbReference type="PROSITE-ProRule" id="PRU00332"/>
    </source>
</evidence>
<evidence type="ECO:0000256" key="3">
    <source>
        <dbReference type="SAM" id="MobiDB-lite"/>
    </source>
</evidence>
<evidence type="ECO:0000269" key="4">
    <source>
    </source>
</evidence>
<evidence type="ECO:0000269" key="5">
    <source ref="23"/>
</evidence>
<evidence type="ECO:0000305" key="6"/>
<evidence type="ECO:0007744" key="7">
    <source>
        <dbReference type="PDB" id="3PTH"/>
    </source>
</evidence>
<evidence type="ECO:0007744" key="8">
    <source>
    </source>
</evidence>
<evidence type="ECO:0007744" key="9">
    <source>
    </source>
</evidence>
<evidence type="ECO:0007744" key="10">
    <source>
    </source>
</evidence>
<evidence type="ECO:0007744" key="11">
    <source>
    </source>
</evidence>
<evidence type="ECO:0007744" key="12">
    <source>
    </source>
</evidence>
<evidence type="ECO:0007744" key="13">
    <source>
    </source>
</evidence>
<evidence type="ECO:0007744" key="14">
    <source>
    </source>
</evidence>
<evidence type="ECO:0007744" key="15">
    <source>
    </source>
</evidence>
<name>LAR4B_HUMAN</name>
<reference key="1">
    <citation type="journal article" date="1996" name="DNA Res.">
        <title>Prediction of the coding sequences of unidentified human genes. VI. The coding sequences of 80 new genes (KIAA0201-KIAA0280) deduced by analysis of cDNA clones from cell line KG-1 and brain.</title>
        <authorList>
            <person name="Nagase T."/>
            <person name="Seki N."/>
            <person name="Ishikawa K."/>
            <person name="Ohira M."/>
            <person name="Kawarabayasi Y."/>
            <person name="Ohara O."/>
            <person name="Tanaka A."/>
            <person name="Kotani H."/>
            <person name="Miyajima N."/>
            <person name="Nomura N."/>
        </authorList>
    </citation>
    <scope>NUCLEOTIDE SEQUENCE [LARGE SCALE MRNA]</scope>
    <source>
        <tissue>Brain</tissue>
    </source>
</reference>
<reference key="2">
    <citation type="journal article" date="2002" name="DNA Res.">
        <title>Construction of expression-ready cDNA clones for KIAA genes: manual curation of 330 KIAA cDNA clones.</title>
        <authorList>
            <person name="Nakajima D."/>
            <person name="Okazaki N."/>
            <person name="Yamakawa H."/>
            <person name="Kikuno R."/>
            <person name="Ohara O."/>
            <person name="Nagase T."/>
        </authorList>
    </citation>
    <scope>SEQUENCE REVISION</scope>
</reference>
<reference key="3">
    <citation type="journal article" date="2004" name="Nat. Genet.">
        <title>Complete sequencing and characterization of 21,243 full-length human cDNAs.</title>
        <authorList>
            <person name="Ota T."/>
            <person name="Suzuki Y."/>
            <person name="Nishikawa T."/>
            <person name="Otsuki T."/>
            <person name="Sugiyama T."/>
            <person name="Irie R."/>
            <person name="Wakamatsu A."/>
            <person name="Hayashi K."/>
            <person name="Sato H."/>
            <person name="Nagai K."/>
            <person name="Kimura K."/>
            <person name="Makita H."/>
            <person name="Sekine M."/>
            <person name="Obayashi M."/>
            <person name="Nishi T."/>
            <person name="Shibahara T."/>
            <person name="Tanaka T."/>
            <person name="Ishii S."/>
            <person name="Yamamoto J."/>
            <person name="Saito K."/>
            <person name="Kawai Y."/>
            <person name="Isono Y."/>
            <person name="Nakamura Y."/>
            <person name="Nagahari K."/>
            <person name="Murakami K."/>
            <person name="Yasuda T."/>
            <person name="Iwayanagi T."/>
            <person name="Wagatsuma M."/>
            <person name="Shiratori A."/>
            <person name="Sudo H."/>
            <person name="Hosoiri T."/>
            <person name="Kaku Y."/>
            <person name="Kodaira H."/>
            <person name="Kondo H."/>
            <person name="Sugawara M."/>
            <person name="Takahashi M."/>
            <person name="Kanda K."/>
            <person name="Yokoi T."/>
            <person name="Furuya T."/>
            <person name="Kikkawa E."/>
            <person name="Omura Y."/>
            <person name="Abe K."/>
            <person name="Kamihara K."/>
            <person name="Katsuta N."/>
            <person name="Sato K."/>
            <person name="Tanikawa M."/>
            <person name="Yamazaki M."/>
            <person name="Ninomiya K."/>
            <person name="Ishibashi T."/>
            <person name="Yamashita H."/>
            <person name="Murakawa K."/>
            <person name="Fujimori K."/>
            <person name="Tanai H."/>
            <person name="Kimata M."/>
            <person name="Watanabe M."/>
            <person name="Hiraoka S."/>
            <person name="Chiba Y."/>
            <person name="Ishida S."/>
            <person name="Ono Y."/>
            <person name="Takiguchi S."/>
            <person name="Watanabe S."/>
            <person name="Yosida M."/>
            <person name="Hotuta T."/>
            <person name="Kusano J."/>
            <person name="Kanehori K."/>
            <person name="Takahashi-Fujii A."/>
            <person name="Hara H."/>
            <person name="Tanase T.-O."/>
            <person name="Nomura Y."/>
            <person name="Togiya S."/>
            <person name="Komai F."/>
            <person name="Hara R."/>
            <person name="Takeuchi K."/>
            <person name="Arita M."/>
            <person name="Imose N."/>
            <person name="Musashino K."/>
            <person name="Yuuki H."/>
            <person name="Oshima A."/>
            <person name="Sasaki N."/>
            <person name="Aotsuka S."/>
            <person name="Yoshikawa Y."/>
            <person name="Matsunawa H."/>
            <person name="Ichihara T."/>
            <person name="Shiohata N."/>
            <person name="Sano S."/>
            <person name="Moriya S."/>
            <person name="Momiyama H."/>
            <person name="Satoh N."/>
            <person name="Takami S."/>
            <person name="Terashima Y."/>
            <person name="Suzuki O."/>
            <person name="Nakagawa S."/>
            <person name="Senoh A."/>
            <person name="Mizoguchi H."/>
            <person name="Goto Y."/>
            <person name="Shimizu F."/>
            <person name="Wakebe H."/>
            <person name="Hishigaki H."/>
            <person name="Watanabe T."/>
            <person name="Sugiyama A."/>
            <person name="Takemoto M."/>
            <person name="Kawakami B."/>
            <person name="Yamazaki M."/>
            <person name="Watanabe K."/>
            <person name="Kumagai A."/>
            <person name="Itakura S."/>
            <person name="Fukuzumi Y."/>
            <person name="Fujimori Y."/>
            <person name="Komiyama M."/>
            <person name="Tashiro H."/>
            <person name="Tanigami A."/>
            <person name="Fujiwara T."/>
            <person name="Ono T."/>
            <person name="Yamada K."/>
            <person name="Fujii Y."/>
            <person name="Ozaki K."/>
            <person name="Hirao M."/>
            <person name="Ohmori Y."/>
            <person name="Kawabata A."/>
            <person name="Hikiji T."/>
            <person name="Kobatake N."/>
            <person name="Inagaki H."/>
            <person name="Ikema Y."/>
            <person name="Okamoto S."/>
            <person name="Okitani R."/>
            <person name="Kawakami T."/>
            <person name="Noguchi S."/>
            <person name="Itoh T."/>
            <person name="Shigeta K."/>
            <person name="Senba T."/>
            <person name="Matsumura K."/>
            <person name="Nakajima Y."/>
            <person name="Mizuno T."/>
            <person name="Morinaga M."/>
            <person name="Sasaki M."/>
            <person name="Togashi T."/>
            <person name="Oyama M."/>
            <person name="Hata H."/>
            <person name="Watanabe M."/>
            <person name="Komatsu T."/>
            <person name="Mizushima-Sugano J."/>
            <person name="Satoh T."/>
            <person name="Shirai Y."/>
            <person name="Takahashi Y."/>
            <person name="Nakagawa K."/>
            <person name="Okumura K."/>
            <person name="Nagase T."/>
            <person name="Nomura N."/>
            <person name="Kikuchi H."/>
            <person name="Masuho Y."/>
            <person name="Yamashita R."/>
            <person name="Nakai K."/>
            <person name="Yada T."/>
            <person name="Nakamura Y."/>
            <person name="Ohara O."/>
            <person name="Isogai T."/>
            <person name="Sugano S."/>
        </authorList>
    </citation>
    <scope>NUCLEOTIDE SEQUENCE [LARGE SCALE MRNA]</scope>
    <source>
        <tissue>Trachea</tissue>
    </source>
</reference>
<reference key="4">
    <citation type="journal article" date="2004" name="Nature">
        <title>The DNA sequence and comparative analysis of human chromosome 10.</title>
        <authorList>
            <person name="Deloukas P."/>
            <person name="Earthrowl M.E."/>
            <person name="Grafham D.V."/>
            <person name="Rubenfield M."/>
            <person name="French L."/>
            <person name="Steward C.A."/>
            <person name="Sims S.K."/>
            <person name="Jones M.C."/>
            <person name="Searle S."/>
            <person name="Scott C."/>
            <person name="Howe K."/>
            <person name="Hunt S.E."/>
            <person name="Andrews T.D."/>
            <person name="Gilbert J.G.R."/>
            <person name="Swarbreck D."/>
            <person name="Ashurst J.L."/>
            <person name="Taylor A."/>
            <person name="Battles J."/>
            <person name="Bird C.P."/>
            <person name="Ainscough R."/>
            <person name="Almeida J.P."/>
            <person name="Ashwell R.I.S."/>
            <person name="Ambrose K.D."/>
            <person name="Babbage A.K."/>
            <person name="Bagguley C.L."/>
            <person name="Bailey J."/>
            <person name="Banerjee R."/>
            <person name="Bates K."/>
            <person name="Beasley H."/>
            <person name="Bray-Allen S."/>
            <person name="Brown A.J."/>
            <person name="Brown J.Y."/>
            <person name="Burford D.C."/>
            <person name="Burrill W."/>
            <person name="Burton J."/>
            <person name="Cahill P."/>
            <person name="Camire D."/>
            <person name="Carter N.P."/>
            <person name="Chapman J.C."/>
            <person name="Clark S.Y."/>
            <person name="Clarke G."/>
            <person name="Clee C.M."/>
            <person name="Clegg S."/>
            <person name="Corby N."/>
            <person name="Coulson A."/>
            <person name="Dhami P."/>
            <person name="Dutta I."/>
            <person name="Dunn M."/>
            <person name="Faulkner L."/>
            <person name="Frankish A."/>
            <person name="Frankland J.A."/>
            <person name="Garner P."/>
            <person name="Garnett J."/>
            <person name="Gribble S."/>
            <person name="Griffiths C."/>
            <person name="Grocock R."/>
            <person name="Gustafson E."/>
            <person name="Hammond S."/>
            <person name="Harley J.L."/>
            <person name="Hart E."/>
            <person name="Heath P.D."/>
            <person name="Ho T.P."/>
            <person name="Hopkins B."/>
            <person name="Horne J."/>
            <person name="Howden P.J."/>
            <person name="Huckle E."/>
            <person name="Hynds C."/>
            <person name="Johnson C."/>
            <person name="Johnson D."/>
            <person name="Kana A."/>
            <person name="Kay M."/>
            <person name="Kimberley A.M."/>
            <person name="Kershaw J.K."/>
            <person name="Kokkinaki M."/>
            <person name="Laird G.K."/>
            <person name="Lawlor S."/>
            <person name="Lee H.M."/>
            <person name="Leongamornlert D.A."/>
            <person name="Laird G."/>
            <person name="Lloyd C."/>
            <person name="Lloyd D.M."/>
            <person name="Loveland J."/>
            <person name="Lovell J."/>
            <person name="McLaren S."/>
            <person name="McLay K.E."/>
            <person name="McMurray A."/>
            <person name="Mashreghi-Mohammadi M."/>
            <person name="Matthews L."/>
            <person name="Milne S."/>
            <person name="Nickerson T."/>
            <person name="Nguyen M."/>
            <person name="Overton-Larty E."/>
            <person name="Palmer S.A."/>
            <person name="Pearce A.V."/>
            <person name="Peck A.I."/>
            <person name="Pelan S."/>
            <person name="Phillimore B."/>
            <person name="Porter K."/>
            <person name="Rice C.M."/>
            <person name="Rogosin A."/>
            <person name="Ross M.T."/>
            <person name="Sarafidou T."/>
            <person name="Sehra H.K."/>
            <person name="Shownkeen R."/>
            <person name="Skuce C.D."/>
            <person name="Smith M."/>
            <person name="Standring L."/>
            <person name="Sycamore N."/>
            <person name="Tester J."/>
            <person name="Thorpe A."/>
            <person name="Torcasso W."/>
            <person name="Tracey A."/>
            <person name="Tromans A."/>
            <person name="Tsolas J."/>
            <person name="Wall M."/>
            <person name="Walsh J."/>
            <person name="Wang H."/>
            <person name="Weinstock K."/>
            <person name="West A.P."/>
            <person name="Willey D.L."/>
            <person name="Whitehead S.L."/>
            <person name="Wilming L."/>
            <person name="Wray P.W."/>
            <person name="Young L."/>
            <person name="Chen Y."/>
            <person name="Lovering R.C."/>
            <person name="Moschonas N.K."/>
            <person name="Siebert R."/>
            <person name="Fechtel K."/>
            <person name="Bentley D."/>
            <person name="Durbin R.M."/>
            <person name="Hubbard T."/>
            <person name="Doucette-Stamm L."/>
            <person name="Beck S."/>
            <person name="Smith D.R."/>
            <person name="Rogers J."/>
        </authorList>
    </citation>
    <scope>NUCLEOTIDE SEQUENCE [LARGE SCALE GENOMIC DNA]</scope>
</reference>
<reference key="5">
    <citation type="submission" date="2005-09" db="EMBL/GenBank/DDBJ databases">
        <authorList>
            <person name="Mural R.J."/>
            <person name="Istrail S."/>
            <person name="Sutton G."/>
            <person name="Florea L."/>
            <person name="Halpern A.L."/>
            <person name="Mobarry C.M."/>
            <person name="Lippert R."/>
            <person name="Walenz B."/>
            <person name="Shatkay H."/>
            <person name="Dew I."/>
            <person name="Miller J.R."/>
            <person name="Flanigan M.J."/>
            <person name="Edwards N.J."/>
            <person name="Bolanos R."/>
            <person name="Fasulo D."/>
            <person name="Halldorsson B.V."/>
            <person name="Hannenhalli S."/>
            <person name="Turner R."/>
            <person name="Yooseph S."/>
            <person name="Lu F."/>
            <person name="Nusskern D.R."/>
            <person name="Shue B.C."/>
            <person name="Zheng X.H."/>
            <person name="Zhong F."/>
            <person name="Delcher A.L."/>
            <person name="Huson D.H."/>
            <person name="Kravitz S.A."/>
            <person name="Mouchard L."/>
            <person name="Reinert K."/>
            <person name="Remington K.A."/>
            <person name="Clark A.G."/>
            <person name="Waterman M.S."/>
            <person name="Eichler E.E."/>
            <person name="Adams M.D."/>
            <person name="Hunkapiller M.W."/>
            <person name="Myers E.W."/>
            <person name="Venter J.C."/>
        </authorList>
    </citation>
    <scope>NUCLEOTIDE SEQUENCE [LARGE SCALE GENOMIC DNA]</scope>
</reference>
<reference key="6">
    <citation type="journal article" date="2004" name="Genome Res.">
        <title>The status, quality, and expansion of the NIH full-length cDNA project: the Mammalian Gene Collection (MGC).</title>
        <authorList>
            <consortium name="The MGC Project Team"/>
        </authorList>
    </citation>
    <scope>NUCLEOTIDE SEQUENCE [LARGE SCALE MRNA]</scope>
</reference>
<reference key="7">
    <citation type="journal article" date="2007" name="BMC Genomics">
        <title>The full-ORF clone resource of the German cDNA consortium.</title>
        <authorList>
            <person name="Bechtel S."/>
            <person name="Rosenfelder H."/>
            <person name="Duda A."/>
            <person name="Schmidt C.P."/>
            <person name="Ernst U."/>
            <person name="Wellenreuther R."/>
            <person name="Mehrle A."/>
            <person name="Schuster C."/>
            <person name="Bahr A."/>
            <person name="Bloecker H."/>
            <person name="Heubner D."/>
            <person name="Hoerlein A."/>
            <person name="Michel G."/>
            <person name="Wedler H."/>
            <person name="Koehrer K."/>
            <person name="Ottenwaelder B."/>
            <person name="Poustka A."/>
            <person name="Wiemann S."/>
            <person name="Schupp I."/>
        </authorList>
    </citation>
    <scope>NUCLEOTIDE SEQUENCE [LARGE SCALE MRNA] OF 495-738</scope>
    <source>
        <tissue>Fetal kidney</tissue>
    </source>
</reference>
<reference key="8">
    <citation type="journal article" date="2006" name="Nat. Biotechnol.">
        <title>A probability-based approach for high-throughput protein phosphorylation analysis and site localization.</title>
        <authorList>
            <person name="Beausoleil S.A."/>
            <person name="Villen J."/>
            <person name="Gerber S.A."/>
            <person name="Rush J."/>
            <person name="Gygi S.P."/>
        </authorList>
    </citation>
    <scope>PHOSPHORYLATION [LARGE SCALE ANALYSIS] AT SER-434 AND THR-566</scope>
    <scope>IDENTIFICATION BY MASS SPECTROMETRY [LARGE SCALE ANALYSIS]</scope>
    <source>
        <tissue>Cervix carcinoma</tissue>
    </source>
</reference>
<reference key="9">
    <citation type="journal article" date="2007" name="J. Proteome Res.">
        <title>Improved titanium dioxide enrichment of phosphopeptides from HeLa cells and high confident phosphopeptide identification by cross-validation of MS/MS and MS/MS/MS spectra.</title>
        <authorList>
            <person name="Yu L.R."/>
            <person name="Zhu Z."/>
            <person name="Chan K.C."/>
            <person name="Issaq H.J."/>
            <person name="Dimitrov D.S."/>
            <person name="Veenstra T.D."/>
        </authorList>
    </citation>
    <scope>IDENTIFICATION BY MASS SPECTROMETRY [LARGE SCALE ANALYSIS]</scope>
    <source>
        <tissue>Cervix carcinoma</tissue>
    </source>
</reference>
<reference key="10">
    <citation type="journal article" date="2008" name="J. Proteome Res.">
        <title>Combining protein-based IMAC, peptide-based IMAC, and MudPIT for efficient phosphoproteomic analysis.</title>
        <authorList>
            <person name="Cantin G.T."/>
            <person name="Yi W."/>
            <person name="Lu B."/>
            <person name="Park S.K."/>
            <person name="Xu T."/>
            <person name="Lee J.-D."/>
            <person name="Yates J.R. III"/>
        </authorList>
    </citation>
    <scope>IDENTIFICATION BY MASS SPECTROMETRY [LARGE SCALE ANALYSIS]</scope>
    <source>
        <tissue>Cervix carcinoma</tissue>
    </source>
</reference>
<reference key="11">
    <citation type="journal article" date="2008" name="J. Proteome Res.">
        <title>Phosphorylation analysis of primary human T lymphocytes using sequential IMAC and titanium oxide enrichment.</title>
        <authorList>
            <person name="Carrascal M."/>
            <person name="Ovelleiro D."/>
            <person name="Casas V."/>
            <person name="Gay M."/>
            <person name="Abian J."/>
        </authorList>
    </citation>
    <scope>IDENTIFICATION BY MASS SPECTROMETRY [LARGE SCALE ANALYSIS]</scope>
    <source>
        <tissue>T-cell</tissue>
    </source>
</reference>
<reference key="12">
    <citation type="journal article" date="2008" name="Proc. Natl. Acad. Sci. U.S.A.">
        <title>A quantitative atlas of mitotic phosphorylation.</title>
        <authorList>
            <person name="Dephoure N."/>
            <person name="Zhou C."/>
            <person name="Villen J."/>
            <person name="Beausoleil S.A."/>
            <person name="Bakalarski C.E."/>
            <person name="Elledge S.J."/>
            <person name="Gygi S.P."/>
        </authorList>
    </citation>
    <scope>PHOSPHORYLATION [LARGE SCALE ANALYSIS] AT SER-424; SER-434; SER-451; SER-524; SER-727 AND SER-736</scope>
    <scope>IDENTIFICATION BY MASS SPECTROMETRY [LARGE SCALE ANALYSIS]</scope>
    <source>
        <tissue>Cervix carcinoma</tissue>
    </source>
</reference>
<reference key="13">
    <citation type="journal article" date="2009" name="Anal. Chem.">
        <title>Lys-N and trypsin cover complementary parts of the phosphoproteome in a refined SCX-based approach.</title>
        <authorList>
            <person name="Gauci S."/>
            <person name="Helbig A.O."/>
            <person name="Slijper M."/>
            <person name="Krijgsveld J."/>
            <person name="Heck A.J."/>
            <person name="Mohammed S."/>
        </authorList>
    </citation>
    <scope>IDENTIFICATION BY MASS SPECTROMETRY [LARGE SCALE ANALYSIS]</scope>
</reference>
<reference key="14">
    <citation type="journal article" date="2009" name="Sci. Signal.">
        <title>Quantitative phosphoproteomic analysis of T cell receptor signaling reveals system-wide modulation of protein-protein interactions.</title>
        <authorList>
            <person name="Mayya V."/>
            <person name="Lundgren D.H."/>
            <person name="Hwang S.-I."/>
            <person name="Rezaul K."/>
            <person name="Wu L."/>
            <person name="Eng J.K."/>
            <person name="Rodionov V."/>
            <person name="Han D.K."/>
        </authorList>
    </citation>
    <scope>PHOSPHORYLATION [LARGE SCALE ANALYSIS] AT SER-424; THR-518 AND SER-524</scope>
    <scope>IDENTIFICATION BY MASS SPECTROMETRY [LARGE SCALE ANALYSIS]</scope>
    <source>
        <tissue>Leukemic T-cell</tissue>
    </source>
</reference>
<reference key="15">
    <citation type="journal article" date="2009" name="Science">
        <title>Lysine acetylation targets protein complexes and co-regulates major cellular functions.</title>
        <authorList>
            <person name="Choudhary C."/>
            <person name="Kumar C."/>
            <person name="Gnad F."/>
            <person name="Nielsen M.L."/>
            <person name="Rehman M."/>
            <person name="Walther T.C."/>
            <person name="Olsen J.V."/>
            <person name="Mann M."/>
        </authorList>
    </citation>
    <scope>ACETYLATION [LARGE SCALE ANALYSIS] AT LYS-724</scope>
    <scope>IDENTIFICATION BY MASS SPECTROMETRY [LARGE SCALE ANALYSIS]</scope>
</reference>
<reference key="16">
    <citation type="journal article" date="2010" name="RNA">
        <title>A stimulatory role for the La-related protein 4B in translation.</title>
        <authorList>
            <person name="Schaffler K."/>
            <person name="Schulz K."/>
            <person name="Hirmer A."/>
            <person name="Wiesner J."/>
            <person name="Grimm M."/>
            <person name="Sickmann A."/>
            <person name="Fischer U."/>
        </authorList>
    </citation>
    <scope>FUNCTION</scope>
    <scope>SUBCELLULAR LOCATION</scope>
    <scope>INTERACTION WITH PABPC1 AND RACK1</scope>
</reference>
<reference key="17">
    <citation type="journal article" date="2010" name="Sci. Signal.">
        <title>Quantitative phosphoproteomics reveals widespread full phosphorylation site occupancy during mitosis.</title>
        <authorList>
            <person name="Olsen J.V."/>
            <person name="Vermeulen M."/>
            <person name="Santamaria A."/>
            <person name="Kumar C."/>
            <person name="Miller M.L."/>
            <person name="Jensen L.J."/>
            <person name="Gnad F."/>
            <person name="Cox J."/>
            <person name="Jensen T.S."/>
            <person name="Nigg E.A."/>
            <person name="Brunak S."/>
            <person name="Mann M."/>
        </authorList>
    </citation>
    <scope>IDENTIFICATION BY MASS SPECTROMETRY [LARGE SCALE ANALYSIS]</scope>
    <source>
        <tissue>Cervix carcinoma</tissue>
    </source>
</reference>
<reference key="18">
    <citation type="journal article" date="2011" name="BMC Syst. Biol.">
        <title>Initial characterization of the human central proteome.</title>
        <authorList>
            <person name="Burkard T.R."/>
            <person name="Planyavsky M."/>
            <person name="Kaupe I."/>
            <person name="Breitwieser F.P."/>
            <person name="Buerckstuemmer T."/>
            <person name="Bennett K.L."/>
            <person name="Superti-Furga G."/>
            <person name="Colinge J."/>
        </authorList>
    </citation>
    <scope>IDENTIFICATION BY MASS SPECTROMETRY [LARGE SCALE ANALYSIS]</scope>
</reference>
<reference key="19">
    <citation type="journal article" date="2012" name="Proc. Natl. Acad. Sci. U.S.A.">
        <title>N-terminal acetylome analyses and functional insights of the N-terminal acetyltransferase NatB.</title>
        <authorList>
            <person name="Van Damme P."/>
            <person name="Lasa M."/>
            <person name="Polevoda B."/>
            <person name="Gazquez C."/>
            <person name="Elosegui-Artola A."/>
            <person name="Kim D.S."/>
            <person name="De Juan-Pardo E."/>
            <person name="Demeyer K."/>
            <person name="Hole K."/>
            <person name="Larrea E."/>
            <person name="Timmerman E."/>
            <person name="Prieto J."/>
            <person name="Arnesen T."/>
            <person name="Sherman F."/>
            <person name="Gevaert K."/>
            <person name="Aldabe R."/>
        </authorList>
    </citation>
    <scope>ACETYLATION [LARGE SCALE ANALYSIS] AT MET-1</scope>
    <scope>IDENTIFICATION BY MASS SPECTROMETRY [LARGE SCALE ANALYSIS]</scope>
</reference>
<reference key="20">
    <citation type="journal article" date="2013" name="J. Proteome Res.">
        <title>Toward a comprehensive characterization of a human cancer cell phosphoproteome.</title>
        <authorList>
            <person name="Zhou H."/>
            <person name="Di Palma S."/>
            <person name="Preisinger C."/>
            <person name="Peng M."/>
            <person name="Polat A.N."/>
            <person name="Heck A.J."/>
            <person name="Mohammed S."/>
        </authorList>
    </citation>
    <scope>PHOSPHORYLATION [LARGE SCALE ANALYSIS] AT SER-451; SER-488; SER-524; SER-556; SER-568; SER-601; SER-664 AND SER-718</scope>
    <scope>IDENTIFICATION BY MASS SPECTROMETRY [LARGE SCALE ANALYSIS]</scope>
    <source>
        <tissue>Cervix carcinoma</tissue>
        <tissue>Erythroleukemia</tissue>
    </source>
</reference>
<reference key="21">
    <citation type="journal article" date="2014" name="J. Proteomics">
        <title>An enzyme assisted RP-RPLC approach for in-depth analysis of human liver phosphoproteome.</title>
        <authorList>
            <person name="Bian Y."/>
            <person name="Song C."/>
            <person name="Cheng K."/>
            <person name="Dong M."/>
            <person name="Wang F."/>
            <person name="Huang J."/>
            <person name="Sun D."/>
            <person name="Wang L."/>
            <person name="Ye M."/>
            <person name="Zou H."/>
        </authorList>
    </citation>
    <scope>PHOSPHORYLATION [LARGE SCALE ANALYSIS] AT SER-601</scope>
    <scope>IDENTIFICATION BY MASS SPECTROMETRY [LARGE SCALE ANALYSIS]</scope>
    <source>
        <tissue>Liver</tissue>
    </source>
</reference>
<reference key="22">
    <citation type="journal article" date="2014" name="Mol. Cell. Proteomics">
        <title>Immunoaffinity enrichment and mass spectrometry analysis of protein methylation.</title>
        <authorList>
            <person name="Guo A."/>
            <person name="Gu H."/>
            <person name="Zhou J."/>
            <person name="Mulhern D."/>
            <person name="Wang Y."/>
            <person name="Lee K.A."/>
            <person name="Yang V."/>
            <person name="Aguiar M."/>
            <person name="Kornhauser J."/>
            <person name="Jia X."/>
            <person name="Ren J."/>
            <person name="Beausoleil S.A."/>
            <person name="Silva J.C."/>
            <person name="Vemulapalli V."/>
            <person name="Bedford M.T."/>
            <person name="Comb M.J."/>
        </authorList>
    </citation>
    <scope>METHYLATION [LARGE SCALE ANALYSIS] AT ARG-404 AND ARG-419</scope>
    <scope>IDENTIFICATION BY MASS SPECTROMETRY [LARGE SCALE ANALYSIS]</scope>
    <source>
        <tissue>Colon carcinoma</tissue>
    </source>
</reference>
<reference evidence="7" key="23">
    <citation type="submission" date="2010-12" db="PDB data bank">
        <title>LARP4B binds to the PABC1 MLLE domain via a variant PAM2 motif.</title>
        <authorList>
            <person name="Grimm C."/>
            <person name="Pelz J.P."/>
        </authorList>
    </citation>
    <scope>X-RAY CRYSTALLOGRAPHY (1.70 ANGSTROMS) OF 55-69 IN COMPLEX WITH PABPC1</scope>
</reference>
<sequence>MTSDQDAKVVAEPQTQRVQEGKDSAHLMNGPISQTTSQTSSIPPLSQVPATKVSELNPNAEVWGAPVLHLEASSAADGVSAAWEEVAGHHADRGPQGSDANGDGDQGHENAALPDPQESDPADMNALALGPSEYDSLPENSETGGNESQPDSQEDPREVLKKTLEFCLSRENLASDMYLISQMDSDQYVPITTVANLDHIKKLSTDVDLIVEVLRSLPLVQVDEKGEKVRPNQNRCIVILREISESTPVEEVEALFKGDNLPKFINCEFAYNDNWFITFETEADAQQAYKYLREEVKTFQGKPIKARIKAKAIAINTFLPKNGFRPLDVSLYAQQRYATSFYFPPMYSPQQQFPLYSLITPQTWSATHSYLDPPLVTPFPNTGFINGFTSPAFKPAASPLTSLRQYPPRSRNPSKSHLRHAIPSAERGPGLLESPSIFNFTADRLINGVRSPQTRQAGQTRTRIQNPSAYAKREAGPGRVEPGSLESSPGLGRGRKNSFGYRKKREEKFTSSQTQSPTPPKPPSPSFELGLSSFPPLPGAAGNLKTEDLFENRLSSLIIGPSKERTLSADASVNTLPVVVSREPSVPASCAVSATYERSPSPAHLPDDPKVAEKQRETHSVDRLPSALTATACKSVQVNGAATELRKPSYAEICQRTSKEPPSSPLQPQKEQKPNTVGCGKEEKKLAEPAERYREPPALKSTPGAPRDQRRPAGGRPSPSAMGKRLSREQSTPPKSPQ</sequence>
<protein>
    <recommendedName>
        <fullName>La-related protein 4B</fullName>
    </recommendedName>
    <alternativeName>
        <fullName>La ribonucleoprotein domain family member 4B</fullName>
    </alternativeName>
    <alternativeName>
        <fullName>La ribonucleoprotein domain family member 5</fullName>
    </alternativeName>
    <alternativeName>
        <fullName>La-related protein 5</fullName>
    </alternativeName>
</protein>